<accession>D4ARJ9</accession>
<reference key="1">
    <citation type="journal article" date="2011" name="Genome Biol.">
        <title>Comparative and functional genomics provide insights into the pathogenicity of dermatophytic fungi.</title>
        <authorList>
            <person name="Burmester A."/>
            <person name="Shelest E."/>
            <person name="Gloeckner G."/>
            <person name="Heddergott C."/>
            <person name="Schindler S."/>
            <person name="Staib P."/>
            <person name="Heidel A."/>
            <person name="Felder M."/>
            <person name="Petzold A."/>
            <person name="Szafranski K."/>
            <person name="Feuermann M."/>
            <person name="Pedruzzi I."/>
            <person name="Priebe S."/>
            <person name="Groth M."/>
            <person name="Winkler R."/>
            <person name="Li W."/>
            <person name="Kniemeyer O."/>
            <person name="Schroeckh V."/>
            <person name="Hertweck C."/>
            <person name="Hube B."/>
            <person name="White T.C."/>
            <person name="Platzer M."/>
            <person name="Guthke R."/>
            <person name="Heitman J."/>
            <person name="Woestemeyer J."/>
            <person name="Zipfel P.F."/>
            <person name="Monod M."/>
            <person name="Brakhage A.A."/>
        </authorList>
    </citation>
    <scope>NUCLEOTIDE SEQUENCE [LARGE SCALE GENOMIC DNA]</scope>
    <source>
        <strain>ATCC MYA-4681 / CBS 112371</strain>
    </source>
</reference>
<sequence>MTIFRPHLRFLFKPHFLYFQSPIGKSSRPFSTSQILRTALDMPPPPVDTTQRLAKLRELMAQNKVDVYSMQFRYTIKAPLIITVVYSFFFFLLLALKLCLRKTAISQSTLLHVTGVETLIRITAAFISSFTGSAGCAIVSMSKAALSTDGRYFSQAAKQLDANWTLLKRGVEGVPTWEEWTAEQAENGKVVGVDPSLITAGENLQYSPLTSVIVVNCSYVIADARKLSQTLKTTGGSLIGIDQNLIDAVWGDERPARPANQITVQPVERAGKSFEEKVEDLRKELAAKKRSAMVISTLDEIAWLFNLRGSDIPYNPVFFSYAIVTPSVAELYVDESKLSPEARKHLEGKVILKPYDSIFQASKVLAESKASASSGSSGKFLLSNKASWSLSLALGGEQNVVEVRSPITDAKAIKNEVELEGFRKCHIRDGAALIEYFAWLENALIKEGAQLDEVDGADKLFEIRKKYDLFVGNSFDTISSTGANGATIHYKPEKSTCAVIDPEAMYLCDSGGQYLDGTTDTTRTLHFGEPTEFQKKAYALVLKGHISIDNAIFPKGTTGYAIDSFARQHLWKEGLDYLHGTGHGVGSFLYAEVPLSANNVLSNEPGYYEDGNFGIRLENLVICKEVQTAHKFGDKPFLGFESITLVPFCQKLLDASLLTEAERKWVNDYHARVWEKTSPFFEKDELTTAWLKRETQPI</sequence>
<evidence type="ECO:0000250" key="1"/>
<evidence type="ECO:0000305" key="2"/>
<keyword id="KW-0031">Aminopeptidase</keyword>
<keyword id="KW-0378">Hydrolase</keyword>
<keyword id="KW-0464">Manganese</keyword>
<keyword id="KW-0479">Metal-binding</keyword>
<keyword id="KW-0482">Metalloprotease</keyword>
<keyword id="KW-0645">Protease</keyword>
<keyword id="KW-1185">Reference proteome</keyword>
<dbReference type="EC" id="3.4.11.9"/>
<dbReference type="EMBL" id="ABSU01000006">
    <property type="protein sequence ID" value="EFE34342.1"/>
    <property type="molecule type" value="Genomic_DNA"/>
</dbReference>
<dbReference type="RefSeq" id="XP_003014982.1">
    <property type="nucleotide sequence ID" value="XM_003014936.1"/>
</dbReference>
<dbReference type="SMR" id="D4ARJ9"/>
<dbReference type="STRING" id="663331.D4ARJ9"/>
<dbReference type="GeneID" id="9520705"/>
<dbReference type="KEGG" id="abe:ARB_06742"/>
<dbReference type="eggNOG" id="KOG2413">
    <property type="taxonomic scope" value="Eukaryota"/>
</dbReference>
<dbReference type="HOGENOM" id="CLU_011781_2_1_1"/>
<dbReference type="OMA" id="EPGMILS"/>
<dbReference type="Proteomes" id="UP000008866">
    <property type="component" value="Unassembled WGS sequence"/>
</dbReference>
<dbReference type="GO" id="GO:0005737">
    <property type="term" value="C:cytoplasm"/>
    <property type="evidence" value="ECO:0007669"/>
    <property type="project" value="UniProtKB-ARBA"/>
</dbReference>
<dbReference type="GO" id="GO:0046872">
    <property type="term" value="F:metal ion binding"/>
    <property type="evidence" value="ECO:0007669"/>
    <property type="project" value="UniProtKB-KW"/>
</dbReference>
<dbReference type="GO" id="GO:0070006">
    <property type="term" value="F:metalloaminopeptidase activity"/>
    <property type="evidence" value="ECO:0007669"/>
    <property type="project" value="InterPro"/>
</dbReference>
<dbReference type="GO" id="GO:0006508">
    <property type="term" value="P:proteolysis"/>
    <property type="evidence" value="ECO:0007669"/>
    <property type="project" value="UniProtKB-KW"/>
</dbReference>
<dbReference type="CDD" id="cd01085">
    <property type="entry name" value="APP"/>
    <property type="match status" value="1"/>
</dbReference>
<dbReference type="FunFam" id="3.40.350.10:FF:000010">
    <property type="entry name" value="Probable Xaa-Pro aminopeptidase P"/>
    <property type="match status" value="1"/>
</dbReference>
<dbReference type="FunFam" id="3.90.230.10:FF:000007">
    <property type="entry name" value="Xaa-Pro aminopeptidase P"/>
    <property type="match status" value="1"/>
</dbReference>
<dbReference type="Gene3D" id="3.90.230.10">
    <property type="entry name" value="Creatinase/methionine aminopeptidase superfamily"/>
    <property type="match status" value="1"/>
</dbReference>
<dbReference type="Gene3D" id="3.40.350.10">
    <property type="entry name" value="Creatinase/prolidase N-terminal domain"/>
    <property type="match status" value="2"/>
</dbReference>
<dbReference type="InterPro" id="IPR029149">
    <property type="entry name" value="Creatin/AminoP/Spt16_N"/>
</dbReference>
<dbReference type="InterPro" id="IPR036005">
    <property type="entry name" value="Creatinase/aminopeptidase-like"/>
</dbReference>
<dbReference type="InterPro" id="IPR000587">
    <property type="entry name" value="Creatinase_N"/>
</dbReference>
<dbReference type="InterPro" id="IPR000994">
    <property type="entry name" value="Pept_M24"/>
</dbReference>
<dbReference type="InterPro" id="IPR033740">
    <property type="entry name" value="Pept_M24B"/>
</dbReference>
<dbReference type="InterPro" id="IPR032416">
    <property type="entry name" value="Peptidase_M24_C"/>
</dbReference>
<dbReference type="InterPro" id="IPR050422">
    <property type="entry name" value="X-Pro_aminopeptidase_P"/>
</dbReference>
<dbReference type="PANTHER" id="PTHR43763">
    <property type="entry name" value="XAA-PRO AMINOPEPTIDASE 1"/>
    <property type="match status" value="1"/>
</dbReference>
<dbReference type="PANTHER" id="PTHR43763:SF6">
    <property type="entry name" value="XAA-PRO AMINOPEPTIDASE 1"/>
    <property type="match status" value="1"/>
</dbReference>
<dbReference type="Pfam" id="PF01321">
    <property type="entry name" value="Creatinase_N"/>
    <property type="match status" value="1"/>
</dbReference>
<dbReference type="Pfam" id="PF16189">
    <property type="entry name" value="Creatinase_N_2"/>
    <property type="match status" value="1"/>
</dbReference>
<dbReference type="Pfam" id="PF00557">
    <property type="entry name" value="Peptidase_M24"/>
    <property type="match status" value="1"/>
</dbReference>
<dbReference type="Pfam" id="PF16188">
    <property type="entry name" value="Peptidase_M24_C"/>
    <property type="match status" value="1"/>
</dbReference>
<dbReference type="SUPFAM" id="SSF55920">
    <property type="entry name" value="Creatinase/aminopeptidase"/>
    <property type="match status" value="1"/>
</dbReference>
<dbReference type="SUPFAM" id="SSF53092">
    <property type="entry name" value="Creatinase/prolidase N-terminal domain"/>
    <property type="match status" value="1"/>
</dbReference>
<gene>
    <name type="primary">AMPP</name>
    <name type="ORF">ARB_06742</name>
</gene>
<organism>
    <name type="scientific">Arthroderma benhamiae (strain ATCC MYA-4681 / CBS 112371)</name>
    <name type="common">Trichophyton mentagrophytes</name>
    <dbReference type="NCBI Taxonomy" id="663331"/>
    <lineage>
        <taxon>Eukaryota</taxon>
        <taxon>Fungi</taxon>
        <taxon>Dikarya</taxon>
        <taxon>Ascomycota</taxon>
        <taxon>Pezizomycotina</taxon>
        <taxon>Eurotiomycetes</taxon>
        <taxon>Eurotiomycetidae</taxon>
        <taxon>Onygenales</taxon>
        <taxon>Arthrodermataceae</taxon>
        <taxon>Trichophyton</taxon>
    </lineage>
</organism>
<proteinExistence type="inferred from homology"/>
<feature type="chain" id="PRO_0000411775" description="Probable Xaa-Pro aminopeptidase P">
    <location>
        <begin position="1"/>
        <end position="698"/>
    </location>
</feature>
<feature type="binding site" evidence="1">
    <location>
        <position position="509"/>
    </location>
    <ligand>
        <name>Mn(2+)</name>
        <dbReference type="ChEBI" id="CHEBI:29035"/>
        <label>2</label>
    </ligand>
</feature>
<feature type="binding site" evidence="1">
    <location>
        <position position="520"/>
    </location>
    <ligand>
        <name>Mn(2+)</name>
        <dbReference type="ChEBI" id="CHEBI:29035"/>
        <label>1</label>
    </ligand>
</feature>
<feature type="binding site" evidence="1">
    <location>
        <position position="520"/>
    </location>
    <ligand>
        <name>Mn(2+)</name>
        <dbReference type="ChEBI" id="CHEBI:29035"/>
        <label>2</label>
    </ligand>
</feature>
<feature type="binding site" evidence="1">
    <location>
        <position position="604"/>
    </location>
    <ligand>
        <name>Mn(2+)</name>
        <dbReference type="ChEBI" id="CHEBI:29035"/>
        <label>1</label>
    </ligand>
</feature>
<feature type="binding site" evidence="1">
    <location>
        <position position="618"/>
    </location>
    <ligand>
        <name>Mn(2+)</name>
        <dbReference type="ChEBI" id="CHEBI:29035"/>
        <label>1</label>
    </ligand>
</feature>
<feature type="binding site" evidence="1">
    <location>
        <position position="618"/>
    </location>
    <ligand>
        <name>Mn(2+)</name>
        <dbReference type="ChEBI" id="CHEBI:29035"/>
        <label>2</label>
    </ligand>
</feature>
<comment type="function">
    <text evidence="1">Catalyzes the removal of a penultimate prolyl residue from the N-termini of peptides.</text>
</comment>
<comment type="catalytic activity">
    <reaction>
        <text>Release of any N-terminal amino acid, including proline, that is linked to proline, even from a dipeptide or tripeptide.</text>
        <dbReference type="EC" id="3.4.11.9"/>
    </reaction>
</comment>
<comment type="cofactor">
    <cofactor evidence="1">
        <name>Mn(2+)</name>
        <dbReference type="ChEBI" id="CHEBI:29035"/>
    </cofactor>
    <text evidence="1">Binds 2 manganese ions per subunit.</text>
</comment>
<comment type="similarity">
    <text evidence="2">Belongs to the peptidase M24B family.</text>
</comment>
<name>AMPP1_ARTBC</name>
<protein>
    <recommendedName>
        <fullName>Probable Xaa-Pro aminopeptidase P</fullName>
        <shortName>AMPP</shortName>
        <shortName>Aminopeptidase P</shortName>
        <ecNumber>3.4.11.9</ecNumber>
    </recommendedName>
    <alternativeName>
        <fullName>Aminoacylproline aminopeptidase</fullName>
    </alternativeName>
    <alternativeName>
        <fullName>Prolidase</fullName>
    </alternativeName>
</protein>